<reference key="1">
    <citation type="journal article" date="2008" name="Appl. Environ. Microbiol.">
        <title>The genome of Polaromonas sp. strain JS666: insights into the evolution of a hydrocarbon- and xenobiotic-degrading bacterium, and features of relevance to biotechnology.</title>
        <authorList>
            <person name="Mattes T.E."/>
            <person name="Alexander A.K."/>
            <person name="Richardson P.M."/>
            <person name="Munk A.C."/>
            <person name="Han C.S."/>
            <person name="Stothard P."/>
            <person name="Coleman N.V."/>
        </authorList>
    </citation>
    <scope>NUCLEOTIDE SEQUENCE [LARGE SCALE GENOMIC DNA]</scope>
    <source>
        <strain>JS666 / ATCC BAA-500</strain>
    </source>
</reference>
<organism>
    <name type="scientific">Polaromonas sp. (strain JS666 / ATCC BAA-500)</name>
    <dbReference type="NCBI Taxonomy" id="296591"/>
    <lineage>
        <taxon>Bacteria</taxon>
        <taxon>Pseudomonadati</taxon>
        <taxon>Pseudomonadota</taxon>
        <taxon>Betaproteobacteria</taxon>
        <taxon>Burkholderiales</taxon>
        <taxon>Comamonadaceae</taxon>
        <taxon>Polaromonas</taxon>
    </lineage>
</organism>
<dbReference type="EMBL" id="CP000316">
    <property type="protein sequence ID" value="ABE42464.1"/>
    <property type="molecule type" value="Genomic_DNA"/>
</dbReference>
<dbReference type="RefSeq" id="WP_011481467.1">
    <property type="nucleotide sequence ID" value="NC_007948.1"/>
</dbReference>
<dbReference type="SMR" id="Q12G78"/>
<dbReference type="STRING" id="296591.Bpro_0500"/>
<dbReference type="KEGG" id="pol:Bpro_0500"/>
<dbReference type="eggNOG" id="COG0522">
    <property type="taxonomic scope" value="Bacteria"/>
</dbReference>
<dbReference type="HOGENOM" id="CLU_092403_0_2_4"/>
<dbReference type="OrthoDB" id="9803672at2"/>
<dbReference type="Proteomes" id="UP000001983">
    <property type="component" value="Chromosome"/>
</dbReference>
<dbReference type="GO" id="GO:0015935">
    <property type="term" value="C:small ribosomal subunit"/>
    <property type="evidence" value="ECO:0007669"/>
    <property type="project" value="InterPro"/>
</dbReference>
<dbReference type="GO" id="GO:0019843">
    <property type="term" value="F:rRNA binding"/>
    <property type="evidence" value="ECO:0007669"/>
    <property type="project" value="UniProtKB-UniRule"/>
</dbReference>
<dbReference type="GO" id="GO:0003735">
    <property type="term" value="F:structural constituent of ribosome"/>
    <property type="evidence" value="ECO:0007669"/>
    <property type="project" value="InterPro"/>
</dbReference>
<dbReference type="GO" id="GO:0042274">
    <property type="term" value="P:ribosomal small subunit biogenesis"/>
    <property type="evidence" value="ECO:0007669"/>
    <property type="project" value="TreeGrafter"/>
</dbReference>
<dbReference type="GO" id="GO:0006412">
    <property type="term" value="P:translation"/>
    <property type="evidence" value="ECO:0007669"/>
    <property type="project" value="UniProtKB-UniRule"/>
</dbReference>
<dbReference type="CDD" id="cd00165">
    <property type="entry name" value="S4"/>
    <property type="match status" value="1"/>
</dbReference>
<dbReference type="FunFam" id="1.10.1050.10:FF:000001">
    <property type="entry name" value="30S ribosomal protein S4"/>
    <property type="match status" value="1"/>
</dbReference>
<dbReference type="FunFam" id="3.10.290.10:FF:000001">
    <property type="entry name" value="30S ribosomal protein S4"/>
    <property type="match status" value="1"/>
</dbReference>
<dbReference type="Gene3D" id="1.10.1050.10">
    <property type="entry name" value="Ribosomal Protein S4 Delta 41, Chain A, domain 1"/>
    <property type="match status" value="1"/>
</dbReference>
<dbReference type="Gene3D" id="3.10.290.10">
    <property type="entry name" value="RNA-binding S4 domain"/>
    <property type="match status" value="1"/>
</dbReference>
<dbReference type="HAMAP" id="MF_01306_B">
    <property type="entry name" value="Ribosomal_uS4_B"/>
    <property type="match status" value="1"/>
</dbReference>
<dbReference type="InterPro" id="IPR022801">
    <property type="entry name" value="Ribosomal_uS4"/>
</dbReference>
<dbReference type="InterPro" id="IPR005709">
    <property type="entry name" value="Ribosomal_uS4_bac-type"/>
</dbReference>
<dbReference type="InterPro" id="IPR018079">
    <property type="entry name" value="Ribosomal_uS4_CS"/>
</dbReference>
<dbReference type="InterPro" id="IPR001912">
    <property type="entry name" value="Ribosomal_uS4_N"/>
</dbReference>
<dbReference type="InterPro" id="IPR002942">
    <property type="entry name" value="S4_RNA-bd"/>
</dbReference>
<dbReference type="InterPro" id="IPR036986">
    <property type="entry name" value="S4_RNA-bd_sf"/>
</dbReference>
<dbReference type="NCBIfam" id="NF003717">
    <property type="entry name" value="PRK05327.1"/>
    <property type="match status" value="1"/>
</dbReference>
<dbReference type="NCBIfam" id="TIGR01017">
    <property type="entry name" value="rpsD_bact"/>
    <property type="match status" value="1"/>
</dbReference>
<dbReference type="PANTHER" id="PTHR11831">
    <property type="entry name" value="30S 40S RIBOSOMAL PROTEIN"/>
    <property type="match status" value="1"/>
</dbReference>
<dbReference type="PANTHER" id="PTHR11831:SF4">
    <property type="entry name" value="SMALL RIBOSOMAL SUBUNIT PROTEIN US4M"/>
    <property type="match status" value="1"/>
</dbReference>
<dbReference type="Pfam" id="PF00163">
    <property type="entry name" value="Ribosomal_S4"/>
    <property type="match status" value="1"/>
</dbReference>
<dbReference type="Pfam" id="PF01479">
    <property type="entry name" value="S4"/>
    <property type="match status" value="1"/>
</dbReference>
<dbReference type="SMART" id="SM01390">
    <property type="entry name" value="Ribosomal_S4"/>
    <property type="match status" value="1"/>
</dbReference>
<dbReference type="SMART" id="SM00363">
    <property type="entry name" value="S4"/>
    <property type="match status" value="1"/>
</dbReference>
<dbReference type="SUPFAM" id="SSF55174">
    <property type="entry name" value="Alpha-L RNA-binding motif"/>
    <property type="match status" value="1"/>
</dbReference>
<dbReference type="PROSITE" id="PS00632">
    <property type="entry name" value="RIBOSOMAL_S4"/>
    <property type="match status" value="1"/>
</dbReference>
<dbReference type="PROSITE" id="PS50889">
    <property type="entry name" value="S4"/>
    <property type="match status" value="1"/>
</dbReference>
<sequence length="207" mass="23359">MARYLGPKAKLSRREGTDLFLKSARRAISDKAKFDSKPGQHGRTSGTRTSDFGLQLREKQKVKRMYGVLEKQFRRYFEEADRRKGNTGANLLFILESRLDNVVYRMGFGSTRAEARQLVSHKAITVNGNSVNIPSYMVKTGDVIAVRDKSKKQTRVTEALELAKQVGLPAWVDVNADKGEGVFKKVPDRDEFAADVNESLIVELYSR</sequence>
<keyword id="KW-1185">Reference proteome</keyword>
<keyword id="KW-0687">Ribonucleoprotein</keyword>
<keyword id="KW-0689">Ribosomal protein</keyword>
<keyword id="KW-0694">RNA-binding</keyword>
<keyword id="KW-0699">rRNA-binding</keyword>
<name>RS4_POLSJ</name>
<protein>
    <recommendedName>
        <fullName evidence="1">Small ribosomal subunit protein uS4</fullName>
    </recommendedName>
    <alternativeName>
        <fullName evidence="3">30S ribosomal protein S4</fullName>
    </alternativeName>
</protein>
<evidence type="ECO:0000255" key="1">
    <source>
        <dbReference type="HAMAP-Rule" id="MF_01306"/>
    </source>
</evidence>
<evidence type="ECO:0000256" key="2">
    <source>
        <dbReference type="SAM" id="MobiDB-lite"/>
    </source>
</evidence>
<evidence type="ECO:0000305" key="3"/>
<comment type="function">
    <text evidence="1">One of the primary rRNA binding proteins, it binds directly to 16S rRNA where it nucleates assembly of the body of the 30S subunit.</text>
</comment>
<comment type="function">
    <text evidence="1">With S5 and S12 plays an important role in translational accuracy.</text>
</comment>
<comment type="subunit">
    <text evidence="1">Part of the 30S ribosomal subunit. Contacts protein S5. The interaction surface between S4 and S5 is involved in control of translational fidelity.</text>
</comment>
<comment type="similarity">
    <text evidence="1">Belongs to the universal ribosomal protein uS4 family.</text>
</comment>
<feature type="chain" id="PRO_0000293334" description="Small ribosomal subunit protein uS4">
    <location>
        <begin position="1"/>
        <end position="207"/>
    </location>
</feature>
<feature type="domain" description="S4 RNA-binding" evidence="1">
    <location>
        <begin position="97"/>
        <end position="158"/>
    </location>
</feature>
<feature type="region of interest" description="Disordered" evidence="2">
    <location>
        <begin position="31"/>
        <end position="53"/>
    </location>
</feature>
<feature type="compositionally biased region" description="Polar residues" evidence="2">
    <location>
        <begin position="42"/>
        <end position="52"/>
    </location>
</feature>
<accession>Q12G78</accession>
<gene>
    <name evidence="1" type="primary">rpsD</name>
    <name type="ordered locus">Bpro_0500</name>
</gene>
<proteinExistence type="inferred from homology"/>